<protein>
    <recommendedName>
        <fullName evidence="1">Ribosome-recycling factor</fullName>
        <shortName evidence="1">RRF</shortName>
    </recommendedName>
    <alternativeName>
        <fullName evidence="1">Ribosome-releasing factor</fullName>
    </alternativeName>
</protein>
<evidence type="ECO:0000255" key="1">
    <source>
        <dbReference type="HAMAP-Rule" id="MF_00040"/>
    </source>
</evidence>
<organism>
    <name type="scientific">Bartonella tribocorum (strain CIP 105476 / IBS 506)</name>
    <dbReference type="NCBI Taxonomy" id="382640"/>
    <lineage>
        <taxon>Bacteria</taxon>
        <taxon>Pseudomonadati</taxon>
        <taxon>Pseudomonadota</taxon>
        <taxon>Alphaproteobacteria</taxon>
        <taxon>Hyphomicrobiales</taxon>
        <taxon>Bartonellaceae</taxon>
        <taxon>Bartonella</taxon>
    </lineage>
</organism>
<proteinExistence type="inferred from homology"/>
<feature type="chain" id="PRO_1000074570" description="Ribosome-recycling factor">
    <location>
        <begin position="1"/>
        <end position="186"/>
    </location>
</feature>
<name>RRF_BART1</name>
<comment type="function">
    <text evidence="1">Responsible for the release of ribosomes from messenger RNA at the termination of protein biosynthesis. May increase the efficiency of translation by recycling ribosomes from one round of translation to another.</text>
</comment>
<comment type="subcellular location">
    <subcellularLocation>
        <location evidence="1">Cytoplasm</location>
    </subcellularLocation>
</comment>
<comment type="similarity">
    <text evidence="1">Belongs to the RRF family.</text>
</comment>
<keyword id="KW-0963">Cytoplasm</keyword>
<keyword id="KW-0648">Protein biosynthesis</keyword>
<accession>A9ISK9</accession>
<dbReference type="EMBL" id="AM260525">
    <property type="protein sequence ID" value="CAK01313.1"/>
    <property type="molecule type" value="Genomic_DNA"/>
</dbReference>
<dbReference type="RefSeq" id="WP_012231499.1">
    <property type="nucleotide sequence ID" value="NC_010161.1"/>
</dbReference>
<dbReference type="SMR" id="A9ISK9"/>
<dbReference type="KEGG" id="btr:BT_0915"/>
<dbReference type="eggNOG" id="COG0233">
    <property type="taxonomic scope" value="Bacteria"/>
</dbReference>
<dbReference type="HOGENOM" id="CLU_073981_2_0_5"/>
<dbReference type="Proteomes" id="UP000001592">
    <property type="component" value="Chromosome"/>
</dbReference>
<dbReference type="GO" id="GO:0005829">
    <property type="term" value="C:cytosol"/>
    <property type="evidence" value="ECO:0007669"/>
    <property type="project" value="GOC"/>
</dbReference>
<dbReference type="GO" id="GO:0043023">
    <property type="term" value="F:ribosomal large subunit binding"/>
    <property type="evidence" value="ECO:0007669"/>
    <property type="project" value="TreeGrafter"/>
</dbReference>
<dbReference type="GO" id="GO:0002184">
    <property type="term" value="P:cytoplasmic translational termination"/>
    <property type="evidence" value="ECO:0007669"/>
    <property type="project" value="TreeGrafter"/>
</dbReference>
<dbReference type="CDD" id="cd00520">
    <property type="entry name" value="RRF"/>
    <property type="match status" value="1"/>
</dbReference>
<dbReference type="FunFam" id="1.10.132.20:FF:000001">
    <property type="entry name" value="Ribosome-recycling factor"/>
    <property type="match status" value="1"/>
</dbReference>
<dbReference type="FunFam" id="3.30.1360.40:FF:000001">
    <property type="entry name" value="Ribosome-recycling factor"/>
    <property type="match status" value="1"/>
</dbReference>
<dbReference type="Gene3D" id="3.30.1360.40">
    <property type="match status" value="1"/>
</dbReference>
<dbReference type="Gene3D" id="1.10.132.20">
    <property type="entry name" value="Ribosome-recycling factor"/>
    <property type="match status" value="1"/>
</dbReference>
<dbReference type="HAMAP" id="MF_00040">
    <property type="entry name" value="RRF"/>
    <property type="match status" value="1"/>
</dbReference>
<dbReference type="InterPro" id="IPR002661">
    <property type="entry name" value="Ribosome_recyc_fac"/>
</dbReference>
<dbReference type="InterPro" id="IPR023584">
    <property type="entry name" value="Ribosome_recyc_fac_dom"/>
</dbReference>
<dbReference type="InterPro" id="IPR036191">
    <property type="entry name" value="RRF_sf"/>
</dbReference>
<dbReference type="NCBIfam" id="TIGR00496">
    <property type="entry name" value="frr"/>
    <property type="match status" value="1"/>
</dbReference>
<dbReference type="PANTHER" id="PTHR20982:SF3">
    <property type="entry name" value="MITOCHONDRIAL RIBOSOME RECYCLING FACTOR PSEUDO 1"/>
    <property type="match status" value="1"/>
</dbReference>
<dbReference type="PANTHER" id="PTHR20982">
    <property type="entry name" value="RIBOSOME RECYCLING FACTOR"/>
    <property type="match status" value="1"/>
</dbReference>
<dbReference type="Pfam" id="PF01765">
    <property type="entry name" value="RRF"/>
    <property type="match status" value="1"/>
</dbReference>
<dbReference type="SUPFAM" id="SSF55194">
    <property type="entry name" value="Ribosome recycling factor, RRF"/>
    <property type="match status" value="1"/>
</dbReference>
<gene>
    <name evidence="1" type="primary">frr</name>
    <name type="ordered locus">BT_0915</name>
</gene>
<reference key="1">
    <citation type="journal article" date="2007" name="Nat. Genet.">
        <title>Genomic analysis of Bartonella identifies type IV secretion systems as host adaptability factors.</title>
        <authorList>
            <person name="Saenz H.L."/>
            <person name="Engel P."/>
            <person name="Stoeckli M.C."/>
            <person name="Lanz C."/>
            <person name="Raddatz G."/>
            <person name="Vayssier-Taussat M."/>
            <person name="Birtles R."/>
            <person name="Schuster S.C."/>
            <person name="Dehio C."/>
        </authorList>
    </citation>
    <scope>NUCLEOTIDE SEQUENCE [LARGE SCALE GENOMIC DNA]</scope>
    <source>
        <strain>CIP 105476 / IBS 506</strain>
    </source>
</reference>
<sequence length="186" mass="20724">MNVASIMDDLKRRMDGAIVAFKHELGGLRTGRASASLLEPLTVESYGSVVHINQVANISVPEPRMLFVSVWDKTMVGAVERAIRDSGLGLNPITDGTNLRIPLPELNEERRKELVKIAHHYAEQARVATRHVRRDGMDNLKKLEKDGEIGQDEAHSLSEKVQKLTDETIADIDKILAVKESEIMHV</sequence>